<reference key="1">
    <citation type="journal article" date="2010" name="PLoS Genet.">
        <title>Genome sequence of the plant growth promoting endophytic bacterium Enterobacter sp. 638.</title>
        <authorList>
            <person name="Taghavi S."/>
            <person name="van der Lelie D."/>
            <person name="Hoffman A."/>
            <person name="Zhang Y.B."/>
            <person name="Walla M.D."/>
            <person name="Vangronsveld J."/>
            <person name="Newman L."/>
            <person name="Monchy S."/>
        </authorList>
    </citation>
    <scope>NUCLEOTIDE SEQUENCE [LARGE SCALE GENOMIC DNA]</scope>
    <source>
        <strain>638</strain>
    </source>
</reference>
<keyword id="KW-0238">DNA-binding</keyword>
<keyword id="KW-0804">Transcription</keyword>
<keyword id="KW-0805">Transcription regulation</keyword>
<gene>
    <name evidence="1" type="primary">argP</name>
    <name type="synonym">iciA</name>
    <name type="ordered locus">Ent638_3334</name>
</gene>
<name>ARGP_ENT38</name>
<feature type="chain" id="PRO_1000060877" description="HTH-type transcriptional regulator ArgP">
    <location>
        <begin position="1"/>
        <end position="297"/>
    </location>
</feature>
<feature type="domain" description="HTH lysR-type" evidence="1">
    <location>
        <begin position="4"/>
        <end position="60"/>
    </location>
</feature>
<feature type="DNA-binding region" description="H-T-H motif" evidence="1">
    <location>
        <begin position="21"/>
        <end position="40"/>
    </location>
</feature>
<evidence type="ECO:0000255" key="1">
    <source>
        <dbReference type="HAMAP-Rule" id="MF_00513"/>
    </source>
</evidence>
<evidence type="ECO:0000305" key="2"/>
<protein>
    <recommendedName>
        <fullName evidence="1">HTH-type transcriptional regulator ArgP</fullName>
    </recommendedName>
</protein>
<dbReference type="EMBL" id="CP000653">
    <property type="protein sequence ID" value="ABP61996.1"/>
    <property type="molecule type" value="Genomic_DNA"/>
</dbReference>
<dbReference type="RefSeq" id="WP_015960324.1">
    <property type="nucleotide sequence ID" value="NC_009436.1"/>
</dbReference>
<dbReference type="SMR" id="A4WE66"/>
<dbReference type="STRING" id="399742.Ent638_3334"/>
<dbReference type="GeneID" id="93306300"/>
<dbReference type="KEGG" id="ent:Ent638_3334"/>
<dbReference type="eggNOG" id="COG0583">
    <property type="taxonomic scope" value="Bacteria"/>
</dbReference>
<dbReference type="HOGENOM" id="CLU_063829_0_0_6"/>
<dbReference type="OrthoDB" id="3252676at2"/>
<dbReference type="Proteomes" id="UP000000230">
    <property type="component" value="Chromosome"/>
</dbReference>
<dbReference type="GO" id="GO:0003677">
    <property type="term" value="F:DNA binding"/>
    <property type="evidence" value="ECO:0007669"/>
    <property type="project" value="UniProtKB-UniRule"/>
</dbReference>
<dbReference type="GO" id="GO:0003700">
    <property type="term" value="F:DNA-binding transcription factor activity"/>
    <property type="evidence" value="ECO:0007669"/>
    <property type="project" value="UniProtKB-UniRule"/>
</dbReference>
<dbReference type="CDD" id="cd08428">
    <property type="entry name" value="PBP2_IciA_ArgP"/>
    <property type="match status" value="1"/>
</dbReference>
<dbReference type="FunFam" id="1.10.10.10:FF:000061">
    <property type="entry name" value="HTH-type transcriptional regulator ArgP"/>
    <property type="match status" value="1"/>
</dbReference>
<dbReference type="FunFam" id="3.40.190.290:FF:000002">
    <property type="entry name" value="HTH-type transcriptional regulator ArgP"/>
    <property type="match status" value="1"/>
</dbReference>
<dbReference type="Gene3D" id="3.40.190.290">
    <property type="match status" value="1"/>
</dbReference>
<dbReference type="Gene3D" id="1.10.10.10">
    <property type="entry name" value="Winged helix-like DNA-binding domain superfamily/Winged helix DNA-binding domain"/>
    <property type="match status" value="1"/>
</dbReference>
<dbReference type="HAMAP" id="MF_00513">
    <property type="entry name" value="HTH_type_ArgP"/>
    <property type="match status" value="1"/>
</dbReference>
<dbReference type="InterPro" id="IPR017685">
    <property type="entry name" value="ArgP"/>
</dbReference>
<dbReference type="InterPro" id="IPR023490">
    <property type="entry name" value="ArgP_gammaproteobact"/>
</dbReference>
<dbReference type="InterPro" id="IPR050176">
    <property type="entry name" value="LTTR"/>
</dbReference>
<dbReference type="InterPro" id="IPR005119">
    <property type="entry name" value="LysR_subst-bd"/>
</dbReference>
<dbReference type="InterPro" id="IPR000847">
    <property type="entry name" value="Tscrpt_reg_HTH_LysR"/>
</dbReference>
<dbReference type="InterPro" id="IPR036388">
    <property type="entry name" value="WH-like_DNA-bd_sf"/>
</dbReference>
<dbReference type="InterPro" id="IPR036390">
    <property type="entry name" value="WH_DNA-bd_sf"/>
</dbReference>
<dbReference type="NCBIfam" id="TIGR03298">
    <property type="entry name" value="argP"/>
    <property type="match status" value="1"/>
</dbReference>
<dbReference type="NCBIfam" id="NF002964">
    <property type="entry name" value="PRK03635.1"/>
    <property type="match status" value="1"/>
</dbReference>
<dbReference type="NCBIfam" id="NF009888">
    <property type="entry name" value="PRK13348.1"/>
    <property type="match status" value="1"/>
</dbReference>
<dbReference type="PANTHER" id="PTHR30579:SF2">
    <property type="entry name" value="HTH-TYPE TRANSCRIPTIONAL REGULATOR ARGP"/>
    <property type="match status" value="1"/>
</dbReference>
<dbReference type="PANTHER" id="PTHR30579">
    <property type="entry name" value="TRANSCRIPTIONAL REGULATOR"/>
    <property type="match status" value="1"/>
</dbReference>
<dbReference type="Pfam" id="PF00126">
    <property type="entry name" value="HTH_1"/>
    <property type="match status" value="1"/>
</dbReference>
<dbReference type="Pfam" id="PF03466">
    <property type="entry name" value="LysR_substrate"/>
    <property type="match status" value="1"/>
</dbReference>
<dbReference type="PRINTS" id="PR00039">
    <property type="entry name" value="HTHLYSR"/>
</dbReference>
<dbReference type="SUPFAM" id="SSF53850">
    <property type="entry name" value="Periplasmic binding protein-like II"/>
    <property type="match status" value="1"/>
</dbReference>
<dbReference type="SUPFAM" id="SSF46785">
    <property type="entry name" value="Winged helix' DNA-binding domain"/>
    <property type="match status" value="1"/>
</dbReference>
<dbReference type="PROSITE" id="PS50931">
    <property type="entry name" value="HTH_LYSR"/>
    <property type="match status" value="1"/>
</dbReference>
<sequence length="297" mass="33350">MKRPDYRTLQALDAVIRERGFERAAQKLCITQSAVSQRIKQLENMFGQPLLVRTVPPRPTEQGQKLLALLRQVELLEEEWLGDEQTGSTPLLLSLAVNADSLATWLLPALSAVLADSPIRLNLQVEDETRTQERLRRGEVVGAVSIQPQALPSCLVDQLGALDYLFVGSKAFADRYFPNGVTRAALLKAPAVAFDHLDDMHQAFLQQNFDLPPGSVPCHIVNSSEAFVQLARQGTTCCMIPHLQIEKELKSGELIDLTPGLYQRRMLYWHRFAPESRMMRNVTDALLAYGHKVLRQD</sequence>
<comment type="function">
    <text evidence="1">Controls the transcription of genes involved in arginine and lysine metabolism.</text>
</comment>
<comment type="subunit">
    <text evidence="1">Homodimer.</text>
</comment>
<comment type="similarity">
    <text evidence="2">Belongs to the LysR transcriptional regulatory family.</text>
</comment>
<accession>A4WE66</accession>
<proteinExistence type="inferred from homology"/>
<organism>
    <name type="scientific">Enterobacter sp. (strain 638)</name>
    <dbReference type="NCBI Taxonomy" id="399742"/>
    <lineage>
        <taxon>Bacteria</taxon>
        <taxon>Pseudomonadati</taxon>
        <taxon>Pseudomonadota</taxon>
        <taxon>Gammaproteobacteria</taxon>
        <taxon>Enterobacterales</taxon>
        <taxon>Enterobacteriaceae</taxon>
        <taxon>Enterobacter</taxon>
    </lineage>
</organism>